<proteinExistence type="inferred from homology"/>
<sequence length="222" mass="24263">MTMRDDVPLLDRELVDEAACGGEDGELPLDEQFSLSSYGTSDFFVSSAYSRLPPHTQPVFSKRVVMFAWSFLVLKPLELVAAGMYYGWTGRAVAPACIIAAVLAYYVTWLARALLLYVNIKRDRLPLSPPVFWGLCVIMGGAALCALVAAAHETFSPDGLFHWITASQLLPRTDPLRARSLGIACAAGAAMWVAAADCFAAFTNFFLARFWTRAILKAPVAF</sequence>
<organismHost>
    <name type="scientific">Homo sapiens</name>
    <name type="common">Human</name>
    <dbReference type="NCBI Taxonomy" id="9606"/>
</organismHost>
<reference key="1">
    <citation type="journal article" date="1991" name="J. Gen. Virol.">
        <title>Comparative sequence analysis of the long repeat regions and adjoining parts of the long unique regions in the genomes of herpes simplex viruses types 1 and 2.</title>
        <authorList>
            <person name="McGeoch D.J."/>
            <person name="Cunningham C."/>
            <person name="McIntyre G."/>
            <person name="Dolan A."/>
        </authorList>
    </citation>
    <scope>NUCLEOTIDE SEQUENCE [LARGE SCALE GENOMIC DNA]</scope>
</reference>
<comment type="function">
    <text evidence="1">Plays an essential role in egress of virus particles from the nucleus, cytoplasmic envelopment and virus-induced cell fusion. Forms a functional protein complex with gK and this interaction is absolutely essential for their coordinate intracellular transport, gK glycosylation, expression on host cell surface, and function. Together, they modulate gB-mediated virus-induced cell fusion and virion egress and therefore actively participate in these processes (By similarity).</text>
</comment>
<comment type="subunit">
    <text evidence="1">Interacts with gK (via N-terminus); this interaction plays a role in the coordinate transport of UL20 and gK to the trans-Golgi network (TGN), and is required for their cell surface expression. Interacts with gB (By similarity).</text>
</comment>
<comment type="subcellular location">
    <subcellularLocation>
        <location evidence="1">Virion</location>
    </subcellularLocation>
    <subcellularLocation>
        <location evidence="1">Host cell membrane</location>
        <topology evidence="1">Multi-pass membrane protein</topology>
    </subcellularLocation>
    <subcellularLocation>
        <location evidence="1">Host endosome membrane</location>
        <topology evidence="1">Multi-pass membrane protein</topology>
    </subcellularLocation>
    <subcellularLocation>
        <location evidence="1">Host Golgi apparatus membrane</location>
        <topology evidence="1">Multi-pass membrane protein</topology>
    </subcellularLocation>
    <subcellularLocation>
        <location evidence="1">Host nucleus membrane</location>
        <topology evidence="1">Multi-pass membrane protein</topology>
    </subcellularLocation>
    <text evidence="1">During virion morphogenesis, this protein probably accumulates in the endosomes and trans-Golgi where secondary envelopment occurs. It is probably transported with gK to the cell surface from where it is endocytosed and directed to the trans-Golgi network (TGN) (By similarity).</text>
</comment>
<comment type="similarity">
    <text evidence="3">Belongs to the alphaherpesvirinae UL20 family.</text>
</comment>
<name>UL20_HHV2H</name>
<feature type="chain" id="PRO_0000406177" description="Protein UL20">
    <location>
        <begin position="1"/>
        <end position="222"/>
    </location>
</feature>
<feature type="transmembrane region" description="Helical" evidence="2">
    <location>
        <begin position="64"/>
        <end position="84"/>
    </location>
</feature>
<feature type="transmembrane region" description="Helical" evidence="2">
    <location>
        <begin position="98"/>
        <end position="118"/>
    </location>
</feature>
<feature type="transmembrane region" description="Helical" evidence="2">
    <location>
        <begin position="131"/>
        <end position="151"/>
    </location>
</feature>
<feature type="transmembrane region" description="Helical" evidence="2">
    <location>
        <begin position="182"/>
        <end position="202"/>
    </location>
</feature>
<organism>
    <name type="scientific">Human herpesvirus 2 (strain HG52)</name>
    <name type="common">HHV-2</name>
    <name type="synonym">Human herpes simplex virus 2</name>
    <dbReference type="NCBI Taxonomy" id="10315"/>
    <lineage>
        <taxon>Viruses</taxon>
        <taxon>Duplodnaviria</taxon>
        <taxon>Heunggongvirae</taxon>
        <taxon>Peploviricota</taxon>
        <taxon>Herviviricetes</taxon>
        <taxon>Herpesvirales</taxon>
        <taxon>Orthoherpesviridae</taxon>
        <taxon>Alphaherpesvirinae</taxon>
        <taxon>Simplexvirus</taxon>
        <taxon>Simplexvirus humanalpha2</taxon>
        <taxon>Human herpesvirus 2</taxon>
    </lineage>
</organism>
<gene>
    <name type="primary">UL20</name>
</gene>
<accession>P89443</accession>
<keyword id="KW-1032">Host cell membrane</keyword>
<keyword id="KW-1039">Host endosome</keyword>
<keyword id="KW-1040">Host Golgi apparatus</keyword>
<keyword id="KW-1043">Host membrane</keyword>
<keyword id="KW-1048">Host nucleus</keyword>
<keyword id="KW-0472">Membrane</keyword>
<keyword id="KW-1185">Reference proteome</keyword>
<keyword id="KW-0812">Transmembrane</keyword>
<keyword id="KW-1133">Transmembrane helix</keyword>
<keyword id="KW-0946">Virion</keyword>
<dbReference type="EMBL" id="Z86099">
    <property type="protein sequence ID" value="CAB06744.1"/>
    <property type="molecule type" value="Genomic_DNA"/>
</dbReference>
<dbReference type="RefSeq" id="YP_009137171.1">
    <property type="nucleotide sequence ID" value="NC_001798.2"/>
</dbReference>
<dbReference type="DNASU" id="24271455"/>
<dbReference type="GeneID" id="24271455"/>
<dbReference type="KEGG" id="vg:24271455"/>
<dbReference type="Proteomes" id="UP000001874">
    <property type="component" value="Segment"/>
</dbReference>
<dbReference type="GO" id="GO:0044175">
    <property type="term" value="C:host cell endosome membrane"/>
    <property type="evidence" value="ECO:0007669"/>
    <property type="project" value="UniProtKB-SubCell"/>
</dbReference>
<dbReference type="GO" id="GO:0044178">
    <property type="term" value="C:host cell Golgi membrane"/>
    <property type="evidence" value="ECO:0007669"/>
    <property type="project" value="UniProtKB-SubCell"/>
</dbReference>
<dbReference type="GO" id="GO:0044200">
    <property type="term" value="C:host cell nuclear membrane"/>
    <property type="evidence" value="ECO:0007669"/>
    <property type="project" value="UniProtKB-SubCell"/>
</dbReference>
<dbReference type="GO" id="GO:0020002">
    <property type="term" value="C:host cell plasma membrane"/>
    <property type="evidence" value="ECO:0007669"/>
    <property type="project" value="UniProtKB-SubCell"/>
</dbReference>
<dbReference type="GO" id="GO:0016020">
    <property type="term" value="C:membrane"/>
    <property type="evidence" value="ECO:0007669"/>
    <property type="project" value="UniProtKB-KW"/>
</dbReference>
<dbReference type="GO" id="GO:0044423">
    <property type="term" value="C:virion component"/>
    <property type="evidence" value="ECO:0007669"/>
    <property type="project" value="UniProtKB-KW"/>
</dbReference>
<dbReference type="GO" id="GO:0019058">
    <property type="term" value="P:viral life cycle"/>
    <property type="evidence" value="ECO:0007669"/>
    <property type="project" value="InterPro"/>
</dbReference>
<dbReference type="InterPro" id="IPR007629">
    <property type="entry name" value="Herpes_UL20"/>
</dbReference>
<dbReference type="Pfam" id="PF04544">
    <property type="entry name" value="Herpes_UL20"/>
    <property type="match status" value="1"/>
</dbReference>
<evidence type="ECO:0000250" key="1"/>
<evidence type="ECO:0000255" key="2"/>
<evidence type="ECO:0000305" key="3"/>
<protein>
    <recommendedName>
        <fullName>Protein UL20</fullName>
    </recommendedName>
</protein>